<dbReference type="EC" id="3.4.21.27" evidence="2"/>
<dbReference type="EMBL" id="AB196307">
    <property type="protein sequence ID" value="BAD77921.1"/>
    <property type="molecule type" value="mRNA"/>
</dbReference>
<dbReference type="EMBL" id="AB196308">
    <property type="protein sequence ID" value="BAD77922.1"/>
    <property type="molecule type" value="Genomic_DNA"/>
</dbReference>
<dbReference type="RefSeq" id="NP_001008665.1">
    <property type="nucleotide sequence ID" value="NM_001008665.1"/>
</dbReference>
<dbReference type="SMR" id="Q5NTB3"/>
<dbReference type="FunCoup" id="Q5NTB3">
    <property type="interactions" value="88"/>
</dbReference>
<dbReference type="STRING" id="9913.ENSBTAP00000060221"/>
<dbReference type="MEROPS" id="S01.213"/>
<dbReference type="GlyCosmos" id="Q5NTB3">
    <property type="glycosylation" value="4 sites, No reported glycans"/>
</dbReference>
<dbReference type="GlyGen" id="Q5NTB3">
    <property type="glycosylation" value="4 sites"/>
</dbReference>
<dbReference type="PaxDb" id="9913-ENSBTAP00000004648"/>
<dbReference type="GeneID" id="407998"/>
<dbReference type="KEGG" id="bta:407998"/>
<dbReference type="CTD" id="2160"/>
<dbReference type="eggNOG" id="KOG3627">
    <property type="taxonomic scope" value="Eukaryota"/>
</dbReference>
<dbReference type="InParanoid" id="Q5NTB3"/>
<dbReference type="OrthoDB" id="9448935at2759"/>
<dbReference type="Proteomes" id="UP000009136">
    <property type="component" value="Unplaced"/>
</dbReference>
<dbReference type="GO" id="GO:0005576">
    <property type="term" value="C:extracellular region"/>
    <property type="evidence" value="ECO:0007669"/>
    <property type="project" value="UniProtKB-SubCell"/>
</dbReference>
<dbReference type="GO" id="GO:0008201">
    <property type="term" value="F:heparin binding"/>
    <property type="evidence" value="ECO:0007669"/>
    <property type="project" value="UniProtKB-KW"/>
</dbReference>
<dbReference type="GO" id="GO:0004252">
    <property type="term" value="F:serine-type endopeptidase activity"/>
    <property type="evidence" value="ECO:0007669"/>
    <property type="project" value="UniProtKB-EC"/>
</dbReference>
<dbReference type="GO" id="GO:0007596">
    <property type="term" value="P:blood coagulation"/>
    <property type="evidence" value="ECO:0007669"/>
    <property type="project" value="UniProtKB-KW"/>
</dbReference>
<dbReference type="GO" id="GO:0006508">
    <property type="term" value="P:proteolysis"/>
    <property type="evidence" value="ECO:0007669"/>
    <property type="project" value="UniProtKB-KW"/>
</dbReference>
<dbReference type="CDD" id="cd01100">
    <property type="entry name" value="APPLE_Factor_XI_like"/>
    <property type="match status" value="4"/>
</dbReference>
<dbReference type="CDD" id="cd00190">
    <property type="entry name" value="Tryp_SPc"/>
    <property type="match status" value="1"/>
</dbReference>
<dbReference type="FunFam" id="3.50.4.10:FF:000001">
    <property type="entry name" value="Coagulation factor XI"/>
    <property type="match status" value="3"/>
</dbReference>
<dbReference type="FunFam" id="2.40.10.10:FF:000002">
    <property type="entry name" value="Transmembrane protease serine"/>
    <property type="match status" value="1"/>
</dbReference>
<dbReference type="Gene3D" id="3.50.4.10">
    <property type="entry name" value="Hepatocyte Growth Factor"/>
    <property type="match status" value="4"/>
</dbReference>
<dbReference type="Gene3D" id="2.40.10.10">
    <property type="entry name" value="Trypsin-like serine proteases"/>
    <property type="match status" value="2"/>
</dbReference>
<dbReference type="InterPro" id="IPR000177">
    <property type="entry name" value="Apple"/>
</dbReference>
<dbReference type="InterPro" id="IPR003609">
    <property type="entry name" value="Pan_app"/>
</dbReference>
<dbReference type="InterPro" id="IPR009003">
    <property type="entry name" value="Peptidase_S1_PA"/>
</dbReference>
<dbReference type="InterPro" id="IPR043504">
    <property type="entry name" value="Peptidase_S1_PA_chymotrypsin"/>
</dbReference>
<dbReference type="InterPro" id="IPR001314">
    <property type="entry name" value="Peptidase_S1A"/>
</dbReference>
<dbReference type="InterPro" id="IPR001254">
    <property type="entry name" value="Trypsin_dom"/>
</dbReference>
<dbReference type="InterPro" id="IPR018114">
    <property type="entry name" value="TRYPSIN_HIS"/>
</dbReference>
<dbReference type="InterPro" id="IPR033116">
    <property type="entry name" value="TRYPSIN_SER"/>
</dbReference>
<dbReference type="PANTHER" id="PTHR24252">
    <property type="entry name" value="ACROSIN-RELATED"/>
    <property type="match status" value="1"/>
</dbReference>
<dbReference type="PANTHER" id="PTHR24252:SF7">
    <property type="entry name" value="HYALIN"/>
    <property type="match status" value="1"/>
</dbReference>
<dbReference type="Pfam" id="PF00024">
    <property type="entry name" value="PAN_1"/>
    <property type="match status" value="4"/>
</dbReference>
<dbReference type="Pfam" id="PF00089">
    <property type="entry name" value="Trypsin"/>
    <property type="match status" value="1"/>
</dbReference>
<dbReference type="PRINTS" id="PR00005">
    <property type="entry name" value="APPLEDOMAIN"/>
</dbReference>
<dbReference type="PRINTS" id="PR00722">
    <property type="entry name" value="CHYMOTRYPSIN"/>
</dbReference>
<dbReference type="SMART" id="SM00223">
    <property type="entry name" value="APPLE"/>
    <property type="match status" value="4"/>
</dbReference>
<dbReference type="SMART" id="SM00020">
    <property type="entry name" value="Tryp_SPc"/>
    <property type="match status" value="1"/>
</dbReference>
<dbReference type="SUPFAM" id="SSF50494">
    <property type="entry name" value="Trypsin-like serine proteases"/>
    <property type="match status" value="1"/>
</dbReference>
<dbReference type="PROSITE" id="PS00495">
    <property type="entry name" value="APPLE"/>
    <property type="match status" value="2"/>
</dbReference>
<dbReference type="PROSITE" id="PS50948">
    <property type="entry name" value="PAN"/>
    <property type="match status" value="4"/>
</dbReference>
<dbReference type="PROSITE" id="PS50240">
    <property type="entry name" value="TRYPSIN_DOM"/>
    <property type="match status" value="1"/>
</dbReference>
<dbReference type="PROSITE" id="PS00134">
    <property type="entry name" value="TRYPSIN_HIS"/>
    <property type="match status" value="1"/>
</dbReference>
<dbReference type="PROSITE" id="PS00135">
    <property type="entry name" value="TRYPSIN_SER"/>
    <property type="match status" value="1"/>
</dbReference>
<keyword id="KW-0094">Blood coagulation</keyword>
<keyword id="KW-0225">Disease variant</keyword>
<keyword id="KW-1015">Disulfide bond</keyword>
<keyword id="KW-0325">Glycoprotein</keyword>
<keyword id="KW-0356">Hemostasis</keyword>
<keyword id="KW-0358">Heparin-binding</keyword>
<keyword id="KW-0378">Hydrolase</keyword>
<keyword id="KW-0645">Protease</keyword>
<keyword id="KW-1185">Reference proteome</keyword>
<keyword id="KW-0677">Repeat</keyword>
<keyword id="KW-0964">Secreted</keyword>
<keyword id="KW-0720">Serine protease</keyword>
<keyword id="KW-0732">Signal</keyword>
<keyword id="KW-0865">Zymogen</keyword>
<organism>
    <name type="scientific">Bos taurus</name>
    <name type="common">Bovine</name>
    <dbReference type="NCBI Taxonomy" id="9913"/>
    <lineage>
        <taxon>Eukaryota</taxon>
        <taxon>Metazoa</taxon>
        <taxon>Chordata</taxon>
        <taxon>Craniata</taxon>
        <taxon>Vertebrata</taxon>
        <taxon>Euteleostomi</taxon>
        <taxon>Mammalia</taxon>
        <taxon>Eutheria</taxon>
        <taxon>Laurasiatheria</taxon>
        <taxon>Artiodactyla</taxon>
        <taxon>Ruminantia</taxon>
        <taxon>Pecora</taxon>
        <taxon>Bovidae</taxon>
        <taxon>Bovinae</taxon>
        <taxon>Bos</taxon>
    </lineage>
</organism>
<accession>Q5NTB3</accession>
<sequence>MTLLYQMVHFALFASVAGECVTTLFQDACFKGGDITVAFAPNAKHCQIICTHHPRCLLFTFMTESSSEDPTKWYTCILKDSVTETLPMVNMTGAISGYSSKQCLHHISACSKDMYVDLNMKGMNYNSSLAQSARECQQRCTDDTHCHFFTFATRHFPSIKDRNTCLLKNTQTGTPTSITKLHEVVSGFSLKSCGLSNLACIRDIFPRTAFVDITIDTVMAPDPFVCRSICTHHPSCLFFTFLSEEWPTASERNLCLLKTSSSGLPSARFRKNRAFSGFSLQHCQHSVPVFCHSSFYRNTDFLGEELDIVDADSHEACQKTCTNSIRCQFFTYSPSQESCNGGKGKCYLKLSANGSPTKILHGTGSISGYTLRLCKMDNVCTTKIKTRIVGGTQSVHGEWPWQITLHVTSPTQRHLCGGAIIGNQWILTAAHCFNEVKSPNVLRVYSGILNQSEIKEDTSFFGVQEIIIHDQYEKAESGYDIALLKLETAMNYTDSQWPICLPSKGDRNVMYTECWVTGWGYRKLRDKIQNTLQKAKVPLMTNEECQAGYREHRITSKMVCAGYREGGKDACKGDSGGPLSCKHNEVWHLVGITSWGEGCGQRERPGVYSNVVEYVDWILEKTQGP</sequence>
<name>FA11_BOVIN</name>
<proteinExistence type="evidence at protein level"/>
<evidence type="ECO:0000250" key="1"/>
<evidence type="ECO:0000250" key="2">
    <source>
        <dbReference type="UniProtKB" id="P03951"/>
    </source>
</evidence>
<evidence type="ECO:0000255" key="3"/>
<evidence type="ECO:0000255" key="4">
    <source>
        <dbReference type="PROSITE-ProRule" id="PRU00274"/>
    </source>
</evidence>
<evidence type="ECO:0000255" key="5">
    <source>
        <dbReference type="PROSITE-ProRule" id="PRU00315"/>
    </source>
</evidence>
<evidence type="ECO:0000269" key="6">
    <source>
    </source>
</evidence>
<feature type="signal peptide" evidence="1">
    <location>
        <begin position="1"/>
        <end position="18"/>
    </location>
</feature>
<feature type="chain" id="PRO_0000244565" description="Coagulation factor XIa heavy chain" evidence="1">
    <location>
        <begin position="19"/>
        <end position="387"/>
    </location>
</feature>
<feature type="chain" id="PRO_0000244566" description="Coagulation factor XIa light chain" evidence="1">
    <location>
        <begin position="388"/>
        <end position="625"/>
    </location>
</feature>
<feature type="domain" description="Apple 1" evidence="5">
    <location>
        <begin position="20"/>
        <end position="103"/>
    </location>
</feature>
<feature type="domain" description="Apple 2" evidence="5">
    <location>
        <begin position="110"/>
        <end position="193"/>
    </location>
</feature>
<feature type="domain" description="Apple 3" evidence="5">
    <location>
        <begin position="200"/>
        <end position="283"/>
    </location>
</feature>
<feature type="domain" description="Apple 4" evidence="5">
    <location>
        <begin position="291"/>
        <end position="374"/>
    </location>
</feature>
<feature type="domain" description="Peptidase S1" evidence="4">
    <location>
        <begin position="388"/>
        <end position="623"/>
    </location>
</feature>
<feature type="active site" description="Charge relay system" evidence="1">
    <location>
        <position position="431"/>
    </location>
</feature>
<feature type="active site" description="Charge relay system" evidence="1">
    <location>
        <position position="480"/>
    </location>
</feature>
<feature type="active site" description="Charge relay system" evidence="1">
    <location>
        <position position="575"/>
    </location>
</feature>
<feature type="binding site" evidence="1">
    <location>
        <begin position="547"/>
        <end position="550"/>
    </location>
    <ligand>
        <name>heparin</name>
        <dbReference type="ChEBI" id="CHEBI:28304"/>
    </ligand>
</feature>
<feature type="glycosylation site" description="N-linked (GlcNAc...) asparagine" evidence="2">
    <location>
        <position position="90"/>
    </location>
</feature>
<feature type="glycosylation site" description="N-linked (GlcNAc...) asparagine" evidence="2">
    <location>
        <position position="126"/>
    </location>
</feature>
<feature type="glycosylation site" description="N-linked (GlcNAc...) asparagine" evidence="2">
    <location>
        <position position="450"/>
    </location>
</feature>
<feature type="glycosylation site" description="N-linked (GlcNAc...) asparagine" evidence="2">
    <location>
        <position position="491"/>
    </location>
</feature>
<feature type="disulfide bond" evidence="3">
    <location>
        <begin position="20"/>
        <end position="103"/>
    </location>
</feature>
<feature type="disulfide bond" description="Interchain" evidence="1">
    <location>
        <position position="29"/>
    </location>
</feature>
<feature type="disulfide bond" evidence="1">
    <location>
        <begin position="46"/>
        <end position="76"/>
    </location>
</feature>
<feature type="disulfide bond" evidence="1">
    <location>
        <begin position="50"/>
        <end position="56"/>
    </location>
</feature>
<feature type="disulfide bond" evidence="1">
    <location>
        <begin position="110"/>
        <end position="193"/>
    </location>
</feature>
<feature type="disulfide bond" evidence="1">
    <location>
        <begin position="136"/>
        <end position="165"/>
    </location>
</feature>
<feature type="disulfide bond" evidence="1">
    <location>
        <begin position="140"/>
        <end position="146"/>
    </location>
</feature>
<feature type="disulfide bond" evidence="1">
    <location>
        <begin position="200"/>
        <end position="283"/>
    </location>
</feature>
<feature type="disulfide bond" evidence="1">
    <location>
        <begin position="226"/>
        <end position="255"/>
    </location>
</feature>
<feature type="disulfide bond" evidence="1">
    <location>
        <begin position="230"/>
        <end position="236"/>
    </location>
</feature>
<feature type="disulfide bond" evidence="1">
    <location>
        <begin position="291"/>
        <end position="374"/>
    </location>
</feature>
<feature type="disulfide bond" evidence="1">
    <location>
        <begin position="317"/>
        <end position="346"/>
    </location>
</feature>
<feature type="disulfide bond" evidence="1">
    <location>
        <begin position="321"/>
        <end position="327"/>
    </location>
</feature>
<feature type="disulfide bond" description="Interchain" evidence="3">
    <location>
        <position position="339"/>
    </location>
</feature>
<feature type="disulfide bond" description="Interchain (between heavy and light chains)" evidence="4 5">
    <location>
        <begin position="380"/>
        <end position="500"/>
    </location>
</feature>
<feature type="disulfide bond" evidence="1">
    <location>
        <begin position="416"/>
        <end position="432"/>
    </location>
</feature>
<feature type="disulfide bond" evidence="1">
    <location>
        <begin position="514"/>
        <end position="581"/>
    </location>
</feature>
<feature type="disulfide bond" evidence="1">
    <location>
        <begin position="545"/>
        <end position="560"/>
    </location>
</feature>
<feature type="disulfide bond" evidence="1">
    <location>
        <begin position="571"/>
        <end position="599"/>
    </location>
</feature>
<feature type="sequence variant" description="In factor XI deficiency." evidence="6">
    <original>F</original>
    <variation>LYVQNI</variation>
    <location>
        <position position="290"/>
    </location>
</feature>
<gene>
    <name type="primary">F11</name>
</gene>
<reference key="1">
    <citation type="journal article" date="2005" name="Mamm. Genome">
        <title>An insertion mutation of the bovine F11 gene is responsible for factor XI deficiency in Japanese black cattle.</title>
        <authorList>
            <person name="Kunieda M."/>
            <person name="Tsuji T."/>
            <person name="Abbasi A.R."/>
            <person name="Khalaj M."/>
            <person name="Ikeda M."/>
            <person name="Miyadera K."/>
            <person name="Ogawa H."/>
            <person name="Kunieda T."/>
        </authorList>
    </citation>
    <scope>NUCLEOTIDE SEQUENCE [GENOMIC DNA / MRNA]</scope>
    <scope>VARIANT FACTOR XI DEFICIENCY PHE-290 DELINS LEU-TYR-VAL-GLN-ASN-ILE</scope>
</reference>
<protein>
    <recommendedName>
        <fullName>Coagulation factor XI</fullName>
        <shortName>FXI</shortName>
        <ecNumber evidence="2">3.4.21.27</ecNumber>
    </recommendedName>
    <alternativeName>
        <fullName>Plasma thromboplastin antecedent</fullName>
        <shortName>PTA</shortName>
    </alternativeName>
    <component>
        <recommendedName>
            <fullName>Coagulation factor XIa heavy chain</fullName>
        </recommendedName>
    </component>
    <component>
        <recommendedName>
            <fullName>Coagulation factor XIa light chain</fullName>
        </recommendedName>
    </component>
</protein>
<comment type="function">
    <text evidence="2">Factor XI triggers the middle phase of the intrinsic pathway of blood coagulation by activating factor IX.</text>
</comment>
<comment type="catalytic activity">
    <reaction evidence="2">
        <text>Selective cleavage of Arg-|-Ala and Arg-|-Val bonds in factor IX to form factor IXa.</text>
        <dbReference type="EC" id="3.4.21.27"/>
    </reaction>
</comment>
<comment type="activity regulation">
    <text evidence="2">Inhibited by SERPINA5.</text>
</comment>
<comment type="subunit">
    <text evidence="2">Homodimer; disulfide-linked (By similarity). After activation the heavy and light chains are also linked by a disulfide bond (By similarity). Interacts (activated) with F9 (inactive and activated) in calcium-dependent manner (By similarity). Forms a heterodimer with SERPINA5 (By similarity).</text>
</comment>
<comment type="subcellular location">
    <subcellularLocation>
        <location evidence="1">Secreted</location>
    </subcellularLocation>
</comment>
<comment type="PTM">
    <text evidence="2">Activated by factor XIIa (or XII), which cleaves each polypeptide after Arg-387 into the light chain, which contains the active site, and the heavy chain, which associates with high molecular weight (HMW) kininogen. Activated by F12 (activated); the presence of negatively charged surfaces accelerates activation (By similarity). Activated by F2 (thrombin); the presence of negatively charged surfaces, such as polyphosphate and dextran sulfate, strongly accelerates activation (By similarity). Autoactivated; the presence of negatively charged surfaces, such as polyphosphate and dextran sulfate, accelerates autoactivation and autolysis (By similarity).</text>
</comment>
<comment type="PTM">
    <text evidence="2">N-glycosylated on both chains. N-glycosylated sites mainly consist of nonfucosylated sialylated biantennary (in high abundance) and/or triantennary (in low abundance) complex structures.</text>
</comment>
<comment type="disease">
    <text evidence="6">Defects in F11 are the cause of factor XI deficiency in Japanese black cattle. It is a hereditary mild bleeding disorder with an autosomal recessive mode of inheritance.</text>
</comment>
<comment type="similarity">
    <text evidence="4">Belongs to the peptidase S1 family. Plasma kallikrein subfamily.</text>
</comment>